<proteinExistence type="inferred from homology"/>
<reference key="1">
    <citation type="journal article" date="2003" name="Nature">
        <title>Genome divergence in two Prochlorococcus ecotypes reflects oceanic niche differentiation.</title>
        <authorList>
            <person name="Rocap G."/>
            <person name="Larimer F.W."/>
            <person name="Lamerdin J.E."/>
            <person name="Malfatti S."/>
            <person name="Chain P."/>
            <person name="Ahlgren N.A."/>
            <person name="Arellano A."/>
            <person name="Coleman M."/>
            <person name="Hauser L."/>
            <person name="Hess W.R."/>
            <person name="Johnson Z.I."/>
            <person name="Land M.L."/>
            <person name="Lindell D."/>
            <person name="Post A.F."/>
            <person name="Regala W."/>
            <person name="Shah M."/>
            <person name="Shaw S.L."/>
            <person name="Steglich C."/>
            <person name="Sullivan M.B."/>
            <person name="Ting C.S."/>
            <person name="Tolonen A."/>
            <person name="Webb E.A."/>
            <person name="Zinser E.R."/>
            <person name="Chisholm S.W."/>
        </authorList>
    </citation>
    <scope>NUCLEOTIDE SEQUENCE [LARGE SCALE GENOMIC DNA]</scope>
    <source>
        <strain>CCMP1986 / NIES-2087 / MED4</strain>
    </source>
</reference>
<feature type="chain" id="PRO_0000245685" description="NAD(P)H-quinone oxidoreductase subunit I">
    <location>
        <begin position="1"/>
        <end position="208"/>
    </location>
</feature>
<feature type="domain" description="4Fe-4S ferredoxin-type 1" evidence="1">
    <location>
        <begin position="55"/>
        <end position="84"/>
    </location>
</feature>
<feature type="domain" description="4Fe-4S ferredoxin-type 2" evidence="1">
    <location>
        <begin position="95"/>
        <end position="124"/>
    </location>
</feature>
<feature type="binding site" evidence="1">
    <location>
        <position position="64"/>
    </location>
    <ligand>
        <name>[4Fe-4S] cluster</name>
        <dbReference type="ChEBI" id="CHEBI:49883"/>
        <label>1</label>
    </ligand>
</feature>
<feature type="binding site" evidence="1">
    <location>
        <position position="67"/>
    </location>
    <ligand>
        <name>[4Fe-4S] cluster</name>
        <dbReference type="ChEBI" id="CHEBI:49883"/>
        <label>1</label>
    </ligand>
</feature>
<feature type="binding site" evidence="1">
    <location>
        <position position="70"/>
    </location>
    <ligand>
        <name>[4Fe-4S] cluster</name>
        <dbReference type="ChEBI" id="CHEBI:49883"/>
        <label>1</label>
    </ligand>
</feature>
<feature type="binding site" evidence="1">
    <location>
        <position position="74"/>
    </location>
    <ligand>
        <name>[4Fe-4S] cluster</name>
        <dbReference type="ChEBI" id="CHEBI:49883"/>
        <label>2</label>
    </ligand>
</feature>
<feature type="binding site" evidence="1">
    <location>
        <position position="104"/>
    </location>
    <ligand>
        <name>[4Fe-4S] cluster</name>
        <dbReference type="ChEBI" id="CHEBI:49883"/>
        <label>2</label>
    </ligand>
</feature>
<feature type="binding site" evidence="1">
    <location>
        <position position="107"/>
    </location>
    <ligand>
        <name>[4Fe-4S] cluster</name>
        <dbReference type="ChEBI" id="CHEBI:49883"/>
        <label>2</label>
    </ligand>
</feature>
<feature type="binding site" evidence="1">
    <location>
        <position position="110"/>
    </location>
    <ligand>
        <name>[4Fe-4S] cluster</name>
        <dbReference type="ChEBI" id="CHEBI:49883"/>
        <label>2</label>
    </ligand>
</feature>
<feature type="binding site" evidence="1">
    <location>
        <position position="114"/>
    </location>
    <ligand>
        <name>[4Fe-4S] cluster</name>
        <dbReference type="ChEBI" id="CHEBI:49883"/>
        <label>1</label>
    </ligand>
</feature>
<evidence type="ECO:0000255" key="1">
    <source>
        <dbReference type="HAMAP-Rule" id="MF_01351"/>
    </source>
</evidence>
<accession>Q7TUH1</accession>
<name>NDHI_PROMP</name>
<gene>
    <name evidence="1" type="primary">ndhI</name>
    <name type="ordered locus">PMM0159</name>
</gene>
<keyword id="KW-0004">4Fe-4S</keyword>
<keyword id="KW-0408">Iron</keyword>
<keyword id="KW-0411">Iron-sulfur</keyword>
<keyword id="KW-0472">Membrane</keyword>
<keyword id="KW-0479">Metal-binding</keyword>
<keyword id="KW-0520">NAD</keyword>
<keyword id="KW-0521">NADP</keyword>
<keyword id="KW-0618">Plastoquinone</keyword>
<keyword id="KW-0874">Quinone</keyword>
<keyword id="KW-0677">Repeat</keyword>
<keyword id="KW-0793">Thylakoid</keyword>
<keyword id="KW-1278">Translocase</keyword>
<sequence>MKDFLQKVNSYIKEAFSAGKYLYDGFTVTFDHLRRRPVTVQYPYEKLIPSERYRGRIHYEFDKCIACEVCVRVCPINLPVVDWVMNKETKKKELRNYSIDFGVCIFCGNCVEYCPTNCLSMTEEYELATFDRHNLNFDNIALGRLPTNVTTDPSVKPLRELAYLPKGVMDPHEVPPSDVRVGKLPEEVYDWMKPKLNDIKNPTVEPNK</sequence>
<organism>
    <name type="scientific">Prochlorococcus marinus subsp. pastoris (strain CCMP1986 / NIES-2087 / MED4)</name>
    <dbReference type="NCBI Taxonomy" id="59919"/>
    <lineage>
        <taxon>Bacteria</taxon>
        <taxon>Bacillati</taxon>
        <taxon>Cyanobacteriota</taxon>
        <taxon>Cyanophyceae</taxon>
        <taxon>Synechococcales</taxon>
        <taxon>Prochlorococcaceae</taxon>
        <taxon>Prochlorococcus</taxon>
    </lineage>
</organism>
<dbReference type="EC" id="7.1.1.-" evidence="1"/>
<dbReference type="EMBL" id="BX548174">
    <property type="protein sequence ID" value="CAE18618.1"/>
    <property type="molecule type" value="Genomic_DNA"/>
</dbReference>
<dbReference type="RefSeq" id="WP_011131798.1">
    <property type="nucleotide sequence ID" value="NC_005072.1"/>
</dbReference>
<dbReference type="SMR" id="Q7TUH1"/>
<dbReference type="STRING" id="59919.PMM0159"/>
<dbReference type="KEGG" id="pmm:PMM0159"/>
<dbReference type="eggNOG" id="COG1143">
    <property type="taxonomic scope" value="Bacteria"/>
</dbReference>
<dbReference type="HOGENOM" id="CLU_122804_0_0_3"/>
<dbReference type="OrthoDB" id="9798098at2"/>
<dbReference type="Proteomes" id="UP000001026">
    <property type="component" value="Chromosome"/>
</dbReference>
<dbReference type="GO" id="GO:0031676">
    <property type="term" value="C:plasma membrane-derived thylakoid membrane"/>
    <property type="evidence" value="ECO:0007669"/>
    <property type="project" value="UniProtKB-SubCell"/>
</dbReference>
<dbReference type="GO" id="GO:0051539">
    <property type="term" value="F:4 iron, 4 sulfur cluster binding"/>
    <property type="evidence" value="ECO:0007669"/>
    <property type="project" value="UniProtKB-KW"/>
</dbReference>
<dbReference type="GO" id="GO:0005506">
    <property type="term" value="F:iron ion binding"/>
    <property type="evidence" value="ECO:0007669"/>
    <property type="project" value="UniProtKB-UniRule"/>
</dbReference>
<dbReference type="GO" id="GO:0008137">
    <property type="term" value="F:NADH dehydrogenase (ubiquinone) activity"/>
    <property type="evidence" value="ECO:0007669"/>
    <property type="project" value="InterPro"/>
</dbReference>
<dbReference type="GO" id="GO:0048038">
    <property type="term" value="F:quinone binding"/>
    <property type="evidence" value="ECO:0007669"/>
    <property type="project" value="UniProtKB-KW"/>
</dbReference>
<dbReference type="GO" id="GO:0019684">
    <property type="term" value="P:photosynthesis, light reaction"/>
    <property type="evidence" value="ECO:0007669"/>
    <property type="project" value="UniProtKB-UniRule"/>
</dbReference>
<dbReference type="Gene3D" id="3.30.70.3270">
    <property type="match status" value="1"/>
</dbReference>
<dbReference type="HAMAP" id="MF_01351">
    <property type="entry name" value="NDH1_NuoI"/>
    <property type="match status" value="1"/>
</dbReference>
<dbReference type="InterPro" id="IPR017896">
    <property type="entry name" value="4Fe4S_Fe-S-bd"/>
</dbReference>
<dbReference type="InterPro" id="IPR017900">
    <property type="entry name" value="4Fe4S_Fe_S_CS"/>
</dbReference>
<dbReference type="InterPro" id="IPR010226">
    <property type="entry name" value="NADH_quinone_OxRdtase_chainI"/>
</dbReference>
<dbReference type="InterPro" id="IPR004497">
    <property type="entry name" value="NDHI"/>
</dbReference>
<dbReference type="NCBIfam" id="TIGR00403">
    <property type="entry name" value="ndhI"/>
    <property type="match status" value="1"/>
</dbReference>
<dbReference type="NCBIfam" id="TIGR01971">
    <property type="entry name" value="NuoI"/>
    <property type="match status" value="1"/>
</dbReference>
<dbReference type="NCBIfam" id="NF004537">
    <property type="entry name" value="PRK05888.1-3"/>
    <property type="match status" value="1"/>
</dbReference>
<dbReference type="PANTHER" id="PTHR47275">
    <property type="entry name" value="NAD(P)H-QUINONE OXIDOREDUCTASE SUBUNIT I, CHLOROPLASTIC"/>
    <property type="match status" value="1"/>
</dbReference>
<dbReference type="PANTHER" id="PTHR47275:SF1">
    <property type="entry name" value="NAD(P)H-QUINONE OXIDOREDUCTASE SUBUNIT I, CHLOROPLASTIC"/>
    <property type="match status" value="1"/>
</dbReference>
<dbReference type="Pfam" id="PF12838">
    <property type="entry name" value="Fer4_7"/>
    <property type="match status" value="1"/>
</dbReference>
<dbReference type="SUPFAM" id="SSF54862">
    <property type="entry name" value="4Fe-4S ferredoxins"/>
    <property type="match status" value="1"/>
</dbReference>
<dbReference type="PROSITE" id="PS00198">
    <property type="entry name" value="4FE4S_FER_1"/>
    <property type="match status" value="2"/>
</dbReference>
<dbReference type="PROSITE" id="PS51379">
    <property type="entry name" value="4FE4S_FER_2"/>
    <property type="match status" value="2"/>
</dbReference>
<comment type="function">
    <text evidence="1">NDH-1 shuttles electrons from an unknown electron donor, via FMN and iron-sulfur (Fe-S) centers, to quinones in the respiratory and/or the photosynthetic chain. The immediate electron acceptor for the enzyme in this species is believed to be plastoquinone. Couples the redox reaction to proton translocation, and thus conserves the redox energy in a proton gradient.</text>
</comment>
<comment type="catalytic activity">
    <reaction evidence="1">
        <text>a plastoquinone + NADH + (n+1) H(+)(in) = a plastoquinol + NAD(+) + n H(+)(out)</text>
        <dbReference type="Rhea" id="RHEA:42608"/>
        <dbReference type="Rhea" id="RHEA-COMP:9561"/>
        <dbReference type="Rhea" id="RHEA-COMP:9562"/>
        <dbReference type="ChEBI" id="CHEBI:15378"/>
        <dbReference type="ChEBI" id="CHEBI:17757"/>
        <dbReference type="ChEBI" id="CHEBI:57540"/>
        <dbReference type="ChEBI" id="CHEBI:57945"/>
        <dbReference type="ChEBI" id="CHEBI:62192"/>
    </reaction>
</comment>
<comment type="catalytic activity">
    <reaction evidence="1">
        <text>a plastoquinone + NADPH + (n+1) H(+)(in) = a plastoquinol + NADP(+) + n H(+)(out)</text>
        <dbReference type="Rhea" id="RHEA:42612"/>
        <dbReference type="Rhea" id="RHEA-COMP:9561"/>
        <dbReference type="Rhea" id="RHEA-COMP:9562"/>
        <dbReference type="ChEBI" id="CHEBI:15378"/>
        <dbReference type="ChEBI" id="CHEBI:17757"/>
        <dbReference type="ChEBI" id="CHEBI:57783"/>
        <dbReference type="ChEBI" id="CHEBI:58349"/>
        <dbReference type="ChEBI" id="CHEBI:62192"/>
    </reaction>
</comment>
<comment type="cofactor">
    <cofactor evidence="1">
        <name>[4Fe-4S] cluster</name>
        <dbReference type="ChEBI" id="CHEBI:49883"/>
    </cofactor>
    <text evidence="1">Binds 2 [4Fe-4S] clusters per subunit.</text>
</comment>
<comment type="subunit">
    <text evidence="1">NDH-1 is composed of at least 11 different subunits.</text>
</comment>
<comment type="subcellular location">
    <subcellularLocation>
        <location evidence="1">Cellular thylakoid membrane</location>
        <topology evidence="1">Peripheral membrane protein</topology>
    </subcellularLocation>
</comment>
<comment type="similarity">
    <text evidence="1">Belongs to the complex I 23 kDa subunit family.</text>
</comment>
<protein>
    <recommendedName>
        <fullName evidence="1">NAD(P)H-quinone oxidoreductase subunit I</fullName>
        <ecNumber evidence="1">7.1.1.-</ecNumber>
    </recommendedName>
    <alternativeName>
        <fullName evidence="1">NAD(P)H dehydrogenase I subunit I</fullName>
    </alternativeName>
    <alternativeName>
        <fullName evidence="1">NDH-1 subunit I</fullName>
        <shortName evidence="1">NDH-I</shortName>
    </alternativeName>
</protein>